<gene>
    <name evidence="1" type="primary">accA</name>
    <name type="ordered locus">CT_265</name>
</gene>
<name>ACCA_CHLTR</name>
<comment type="function">
    <text evidence="1">Component of the acetyl coenzyme A carboxylase (ACC) complex. First, biotin carboxylase catalyzes the carboxylation of biotin on its carrier protein (BCCP) and then the CO(2) group is transferred by the carboxyltransferase to acetyl-CoA to form malonyl-CoA.</text>
</comment>
<comment type="catalytic activity">
    <reaction evidence="1">
        <text>N(6)-carboxybiotinyl-L-lysyl-[protein] + acetyl-CoA = N(6)-biotinyl-L-lysyl-[protein] + malonyl-CoA</text>
        <dbReference type="Rhea" id="RHEA:54728"/>
        <dbReference type="Rhea" id="RHEA-COMP:10505"/>
        <dbReference type="Rhea" id="RHEA-COMP:10506"/>
        <dbReference type="ChEBI" id="CHEBI:57288"/>
        <dbReference type="ChEBI" id="CHEBI:57384"/>
        <dbReference type="ChEBI" id="CHEBI:83144"/>
        <dbReference type="ChEBI" id="CHEBI:83145"/>
        <dbReference type="EC" id="2.1.3.15"/>
    </reaction>
</comment>
<comment type="pathway">
    <text evidence="1">Lipid metabolism; malonyl-CoA biosynthesis; malonyl-CoA from acetyl-CoA: step 1/1.</text>
</comment>
<comment type="subunit">
    <text evidence="1">Acetyl-CoA carboxylase is a heterohexamer composed of biotin carboxyl carrier protein (AccB), biotin carboxylase (AccC) and two subunits each of ACCase subunit alpha (AccA) and ACCase subunit beta (AccD).</text>
</comment>
<comment type="subcellular location">
    <subcellularLocation>
        <location evidence="1">Cytoplasm</location>
    </subcellularLocation>
</comment>
<comment type="similarity">
    <text evidence="1">Belongs to the AccA family.</text>
</comment>
<proteinExistence type="inferred from homology"/>
<sequence>MELLPHEKQVVEYEKTIAEFKEKNKENSLLSSSEIQKLDKRLDRLKEKIYSDLTPWERVQICRHPSRPRTVNYIEGMCEEFVELCGDRTFRDDPAVVGGFAKIQGQRFMLIGQEKGCDTKSRMHRNFGMLCPEGFRKALRLAKMAEKFGLPIIFLVDTPGAFPGLTAEERGQGWAIATNLFELARLATPIIVIVIGEGCSGGALGMAIGDVVAMLEHSYYSVISPEGCASILWKDPKKNSDAAAMLKMHGEDLKGFAIVDAVIKEPIGGAHHNPAATYRSVQEYVLQEWLKLKDLPVEELLEKRYQKFRTIGLYETSSESDSEA</sequence>
<protein>
    <recommendedName>
        <fullName evidence="1">Acetyl-coenzyme A carboxylase carboxyl transferase subunit alpha</fullName>
        <shortName evidence="1">ACCase subunit alpha</shortName>
        <shortName evidence="1">Acetyl-CoA carboxylase carboxyltransferase subunit alpha</shortName>
        <ecNumber evidence="1">2.1.3.15</ecNumber>
    </recommendedName>
</protein>
<evidence type="ECO:0000255" key="1">
    <source>
        <dbReference type="HAMAP-Rule" id="MF_00823"/>
    </source>
</evidence>
<evidence type="ECO:0000255" key="2">
    <source>
        <dbReference type="PROSITE-ProRule" id="PRU01137"/>
    </source>
</evidence>
<accession>O84267</accession>
<feature type="chain" id="PRO_0000223753" description="Acetyl-coenzyme A carboxylase carboxyl transferase subunit alpha">
    <location>
        <begin position="1"/>
        <end position="324"/>
    </location>
</feature>
<feature type="domain" description="CoA carboxyltransferase C-terminal" evidence="2">
    <location>
        <begin position="37"/>
        <end position="291"/>
    </location>
</feature>
<dbReference type="EC" id="2.1.3.15" evidence="1"/>
<dbReference type="EMBL" id="AE001273">
    <property type="protein sequence ID" value="AAC67858.1"/>
    <property type="molecule type" value="Genomic_DNA"/>
</dbReference>
<dbReference type="PIR" id="F71536">
    <property type="entry name" value="F71536"/>
</dbReference>
<dbReference type="RefSeq" id="NP_219770.1">
    <property type="nucleotide sequence ID" value="NC_000117.1"/>
</dbReference>
<dbReference type="RefSeq" id="WP_009871612.1">
    <property type="nucleotide sequence ID" value="NC_000117.1"/>
</dbReference>
<dbReference type="SMR" id="O84267"/>
<dbReference type="FunCoup" id="O84267">
    <property type="interactions" value="149"/>
</dbReference>
<dbReference type="STRING" id="272561.CT_265"/>
<dbReference type="EnsemblBacteria" id="AAC67858">
    <property type="protein sequence ID" value="AAC67858"/>
    <property type="gene ID" value="CT_265"/>
</dbReference>
<dbReference type="GeneID" id="884858"/>
<dbReference type="KEGG" id="ctr:CT_265"/>
<dbReference type="PATRIC" id="fig|272561.5.peg.283"/>
<dbReference type="HOGENOM" id="CLU_015486_0_2_0"/>
<dbReference type="InParanoid" id="O84267"/>
<dbReference type="OrthoDB" id="9808023at2"/>
<dbReference type="UniPathway" id="UPA00655">
    <property type="reaction ID" value="UER00711"/>
</dbReference>
<dbReference type="Proteomes" id="UP000000431">
    <property type="component" value="Chromosome"/>
</dbReference>
<dbReference type="GO" id="GO:0009317">
    <property type="term" value="C:acetyl-CoA carboxylase complex"/>
    <property type="evidence" value="ECO:0007669"/>
    <property type="project" value="InterPro"/>
</dbReference>
<dbReference type="GO" id="GO:0003989">
    <property type="term" value="F:acetyl-CoA carboxylase activity"/>
    <property type="evidence" value="ECO:0007669"/>
    <property type="project" value="InterPro"/>
</dbReference>
<dbReference type="GO" id="GO:0005524">
    <property type="term" value="F:ATP binding"/>
    <property type="evidence" value="ECO:0007669"/>
    <property type="project" value="UniProtKB-KW"/>
</dbReference>
<dbReference type="GO" id="GO:0016743">
    <property type="term" value="F:carboxyl- or carbamoyltransferase activity"/>
    <property type="evidence" value="ECO:0007669"/>
    <property type="project" value="UniProtKB-UniRule"/>
</dbReference>
<dbReference type="GO" id="GO:0006633">
    <property type="term" value="P:fatty acid biosynthetic process"/>
    <property type="evidence" value="ECO:0007669"/>
    <property type="project" value="UniProtKB-KW"/>
</dbReference>
<dbReference type="GO" id="GO:2001295">
    <property type="term" value="P:malonyl-CoA biosynthetic process"/>
    <property type="evidence" value="ECO:0007669"/>
    <property type="project" value="UniProtKB-UniRule"/>
</dbReference>
<dbReference type="Gene3D" id="3.90.226.10">
    <property type="entry name" value="2-enoyl-CoA Hydratase, Chain A, domain 1"/>
    <property type="match status" value="1"/>
</dbReference>
<dbReference type="HAMAP" id="MF_00823">
    <property type="entry name" value="AcetylCoA_CT_alpha"/>
    <property type="match status" value="1"/>
</dbReference>
<dbReference type="InterPro" id="IPR001095">
    <property type="entry name" value="Acetyl_CoA_COase_a_su"/>
</dbReference>
<dbReference type="InterPro" id="IPR029045">
    <property type="entry name" value="ClpP/crotonase-like_dom_sf"/>
</dbReference>
<dbReference type="InterPro" id="IPR011763">
    <property type="entry name" value="COA_CT_C"/>
</dbReference>
<dbReference type="NCBIfam" id="TIGR00513">
    <property type="entry name" value="accA"/>
    <property type="match status" value="1"/>
</dbReference>
<dbReference type="NCBIfam" id="NF041504">
    <property type="entry name" value="AccA_sub"/>
    <property type="match status" value="1"/>
</dbReference>
<dbReference type="NCBIfam" id="NF004344">
    <property type="entry name" value="PRK05724.1"/>
    <property type="match status" value="1"/>
</dbReference>
<dbReference type="PANTHER" id="PTHR42853">
    <property type="entry name" value="ACETYL-COENZYME A CARBOXYLASE CARBOXYL TRANSFERASE SUBUNIT ALPHA"/>
    <property type="match status" value="1"/>
</dbReference>
<dbReference type="PANTHER" id="PTHR42853:SF3">
    <property type="entry name" value="ACETYL-COENZYME A CARBOXYLASE CARBOXYL TRANSFERASE SUBUNIT ALPHA, CHLOROPLASTIC"/>
    <property type="match status" value="1"/>
</dbReference>
<dbReference type="Pfam" id="PF03255">
    <property type="entry name" value="ACCA"/>
    <property type="match status" value="1"/>
</dbReference>
<dbReference type="PRINTS" id="PR01069">
    <property type="entry name" value="ACCCTRFRASEA"/>
</dbReference>
<dbReference type="SUPFAM" id="SSF52096">
    <property type="entry name" value="ClpP/crotonase"/>
    <property type="match status" value="1"/>
</dbReference>
<dbReference type="PROSITE" id="PS50989">
    <property type="entry name" value="COA_CT_CTER"/>
    <property type="match status" value="1"/>
</dbReference>
<keyword id="KW-0067">ATP-binding</keyword>
<keyword id="KW-0963">Cytoplasm</keyword>
<keyword id="KW-0275">Fatty acid biosynthesis</keyword>
<keyword id="KW-0276">Fatty acid metabolism</keyword>
<keyword id="KW-0444">Lipid biosynthesis</keyword>
<keyword id="KW-0443">Lipid metabolism</keyword>
<keyword id="KW-0547">Nucleotide-binding</keyword>
<keyword id="KW-1185">Reference proteome</keyword>
<keyword id="KW-0808">Transferase</keyword>
<reference key="1">
    <citation type="journal article" date="1998" name="Science">
        <title>Genome sequence of an obligate intracellular pathogen of humans: Chlamydia trachomatis.</title>
        <authorList>
            <person name="Stephens R.S."/>
            <person name="Kalman S."/>
            <person name="Lammel C.J."/>
            <person name="Fan J."/>
            <person name="Marathe R."/>
            <person name="Aravind L."/>
            <person name="Mitchell W.P."/>
            <person name="Olinger L."/>
            <person name="Tatusov R.L."/>
            <person name="Zhao Q."/>
            <person name="Koonin E.V."/>
            <person name="Davis R.W."/>
        </authorList>
    </citation>
    <scope>NUCLEOTIDE SEQUENCE [LARGE SCALE GENOMIC DNA]</scope>
    <source>
        <strain>ATCC VR-885 / DSM 19411 / UW-3/Cx</strain>
    </source>
</reference>
<organism>
    <name type="scientific">Chlamydia trachomatis serovar D (strain ATCC VR-885 / DSM 19411 / UW-3/Cx)</name>
    <dbReference type="NCBI Taxonomy" id="272561"/>
    <lineage>
        <taxon>Bacteria</taxon>
        <taxon>Pseudomonadati</taxon>
        <taxon>Chlamydiota</taxon>
        <taxon>Chlamydiia</taxon>
        <taxon>Chlamydiales</taxon>
        <taxon>Chlamydiaceae</taxon>
        <taxon>Chlamydia/Chlamydophila group</taxon>
        <taxon>Chlamydia</taxon>
    </lineage>
</organism>